<organism>
    <name type="scientific">Cancer pagurus</name>
    <name type="common">Rock crab</name>
    <dbReference type="NCBI Taxonomy" id="6755"/>
    <lineage>
        <taxon>Eukaryota</taxon>
        <taxon>Metazoa</taxon>
        <taxon>Ecdysozoa</taxon>
        <taxon>Arthropoda</taxon>
        <taxon>Crustacea</taxon>
        <taxon>Multicrustacea</taxon>
        <taxon>Malacostraca</taxon>
        <taxon>Eumalacostraca</taxon>
        <taxon>Eucarida</taxon>
        <taxon>Decapoda</taxon>
        <taxon>Pleocyemata</taxon>
        <taxon>Brachyura</taxon>
        <taxon>Eubrachyura</taxon>
        <taxon>Cancroidea</taxon>
        <taxon>Cancridae</taxon>
        <taxon>Cancer</taxon>
    </lineage>
</organism>
<feature type="chain" id="PRO_0000196167" description="Cuticle protein CP459">
    <location>
        <begin position="1"/>
        <end position="44"/>
    </location>
</feature>
<feature type="repeat" description="1">
    <location>
        <begin position="3"/>
        <end position="20"/>
    </location>
</feature>
<feature type="repeat" description="2">
    <location>
        <begin position="27"/>
        <end position="44"/>
    </location>
</feature>
<keyword id="KW-0193">Cuticle</keyword>
<keyword id="KW-0903">Direct protein sequencing</keyword>
<keyword id="KW-0677">Repeat</keyword>
<evidence type="ECO:0000269" key="1">
    <source>
    </source>
</evidence>
<dbReference type="SMR" id="P81586"/>
<dbReference type="GO" id="GO:0042302">
    <property type="term" value="F:structural constituent of cuticle"/>
    <property type="evidence" value="ECO:0007669"/>
    <property type="project" value="UniProtKB-KW"/>
</dbReference>
<dbReference type="InterPro" id="IPR012539">
    <property type="entry name" value="Cuticle_1"/>
</dbReference>
<dbReference type="Pfam" id="PF08140">
    <property type="entry name" value="Cuticle_1"/>
    <property type="match status" value="1"/>
</dbReference>
<accession>P81586</accession>
<protein>
    <recommendedName>
        <fullName>Cuticle protein CP459</fullName>
        <shortName>CPCP459</shortName>
    </recommendedName>
</protein>
<sequence>AVLLKGPSGVLFEDGQKRLLPPGVEIVLLTESGAVLSNGENVQF</sequence>
<comment type="tissue specificity">
    <text>Calcified shell.</text>
</comment>
<comment type="mass spectrometry"/>
<proteinExistence type="evidence at protein level"/>
<name>CUPC7_CANPG</name>
<reference key="1">
    <citation type="journal article" date="1999" name="Comp. Biochem. Physiol.">
        <title>Exoskeletal proteins from the crab, Cancer pagurus.</title>
        <authorList>
            <person name="Andersen S.O."/>
        </authorList>
    </citation>
    <scope>PROTEIN SEQUENCE</scope>
    <scope>MASS SPECTROMETRY</scope>
    <source>
        <tissue>Carapace cuticle</tissue>
    </source>
</reference>